<protein>
    <recommendedName>
        <fullName evidence="2">Small ribosomal subunit protein uS12</fullName>
    </recommendedName>
    <alternativeName>
        <fullName evidence="3">30S ribosomal protein S12</fullName>
    </alternativeName>
</protein>
<sequence length="127" mass="14100">MPTINQLVRKGRITPEEKSKSRALHSCPQRRGVCLQVMTRTPKKPNSALRKVAKVRLTNGEEVIAYIGGEGHNLQEHSIVLVRGGRVKDLPGVRYHIVRGALDCLGVDKRRQGRSKYGAKRPKAAAK</sequence>
<dbReference type="EMBL" id="CP001071">
    <property type="protein sequence ID" value="ACD04150.1"/>
    <property type="molecule type" value="Genomic_DNA"/>
</dbReference>
<dbReference type="RefSeq" id="WP_012419365.1">
    <property type="nucleotide sequence ID" value="NZ_CP071807.1"/>
</dbReference>
<dbReference type="SMR" id="B2UMU4"/>
<dbReference type="STRING" id="349741.Amuc_0308"/>
<dbReference type="PaxDb" id="349741-Amuc_0308"/>
<dbReference type="KEGG" id="amu:Amuc_0308"/>
<dbReference type="eggNOG" id="COG0048">
    <property type="taxonomic scope" value="Bacteria"/>
</dbReference>
<dbReference type="HOGENOM" id="CLU_104295_1_2_0"/>
<dbReference type="OrthoDB" id="9802366at2"/>
<dbReference type="BioCyc" id="AMUC349741:G1GBX-350-MONOMER"/>
<dbReference type="Proteomes" id="UP000001031">
    <property type="component" value="Chromosome"/>
</dbReference>
<dbReference type="GO" id="GO:0015935">
    <property type="term" value="C:small ribosomal subunit"/>
    <property type="evidence" value="ECO:0007669"/>
    <property type="project" value="InterPro"/>
</dbReference>
<dbReference type="GO" id="GO:0019843">
    <property type="term" value="F:rRNA binding"/>
    <property type="evidence" value="ECO:0007669"/>
    <property type="project" value="UniProtKB-UniRule"/>
</dbReference>
<dbReference type="GO" id="GO:0003735">
    <property type="term" value="F:structural constituent of ribosome"/>
    <property type="evidence" value="ECO:0007669"/>
    <property type="project" value="InterPro"/>
</dbReference>
<dbReference type="GO" id="GO:0000049">
    <property type="term" value="F:tRNA binding"/>
    <property type="evidence" value="ECO:0007669"/>
    <property type="project" value="UniProtKB-UniRule"/>
</dbReference>
<dbReference type="GO" id="GO:0006412">
    <property type="term" value="P:translation"/>
    <property type="evidence" value="ECO:0007669"/>
    <property type="project" value="UniProtKB-UniRule"/>
</dbReference>
<dbReference type="CDD" id="cd03368">
    <property type="entry name" value="Ribosomal_S12"/>
    <property type="match status" value="1"/>
</dbReference>
<dbReference type="FunFam" id="2.40.50.140:FF:000001">
    <property type="entry name" value="30S ribosomal protein S12"/>
    <property type="match status" value="1"/>
</dbReference>
<dbReference type="Gene3D" id="2.40.50.140">
    <property type="entry name" value="Nucleic acid-binding proteins"/>
    <property type="match status" value="1"/>
</dbReference>
<dbReference type="HAMAP" id="MF_00403_B">
    <property type="entry name" value="Ribosomal_uS12_B"/>
    <property type="match status" value="1"/>
</dbReference>
<dbReference type="InterPro" id="IPR012340">
    <property type="entry name" value="NA-bd_OB-fold"/>
</dbReference>
<dbReference type="InterPro" id="IPR006032">
    <property type="entry name" value="Ribosomal_uS12"/>
</dbReference>
<dbReference type="InterPro" id="IPR005679">
    <property type="entry name" value="Ribosomal_uS12_bac"/>
</dbReference>
<dbReference type="NCBIfam" id="TIGR00981">
    <property type="entry name" value="rpsL_bact"/>
    <property type="match status" value="1"/>
</dbReference>
<dbReference type="PANTHER" id="PTHR11652">
    <property type="entry name" value="30S RIBOSOMAL PROTEIN S12 FAMILY MEMBER"/>
    <property type="match status" value="1"/>
</dbReference>
<dbReference type="Pfam" id="PF00164">
    <property type="entry name" value="Ribosom_S12_S23"/>
    <property type="match status" value="1"/>
</dbReference>
<dbReference type="PIRSF" id="PIRSF002133">
    <property type="entry name" value="Ribosomal_S12/S23"/>
    <property type="match status" value="1"/>
</dbReference>
<dbReference type="PRINTS" id="PR01034">
    <property type="entry name" value="RIBOSOMALS12"/>
</dbReference>
<dbReference type="SUPFAM" id="SSF50249">
    <property type="entry name" value="Nucleic acid-binding proteins"/>
    <property type="match status" value="1"/>
</dbReference>
<dbReference type="PROSITE" id="PS00055">
    <property type="entry name" value="RIBOSOMAL_S12"/>
    <property type="match status" value="1"/>
</dbReference>
<comment type="function">
    <text evidence="2">With S4 and S5 plays an important role in translational accuracy.</text>
</comment>
<comment type="function">
    <text evidence="2">Interacts with and stabilizes bases of the 16S rRNA that are involved in tRNA selection in the A site and with the mRNA backbone. Located at the interface of the 30S and 50S subunits, it traverses the body of the 30S subunit contacting proteins on the other side and probably holding the rRNA structure together. The combined cluster of proteins S8, S12 and S17 appears to hold together the shoulder and platform of the 30S subunit.</text>
</comment>
<comment type="subunit">
    <text evidence="2">Part of the 30S ribosomal subunit. Contacts proteins S8 and S17. May interact with IF1 in the 30S initiation complex.</text>
</comment>
<comment type="similarity">
    <text evidence="2">Belongs to the universal ribosomal protein uS12 family.</text>
</comment>
<evidence type="ECO:0000250" key="1"/>
<evidence type="ECO:0000255" key="2">
    <source>
        <dbReference type="HAMAP-Rule" id="MF_00403"/>
    </source>
</evidence>
<evidence type="ECO:0000305" key="3"/>
<gene>
    <name evidence="2" type="primary">rpsL</name>
    <name type="ordered locus">Amuc_0308</name>
</gene>
<keyword id="KW-0488">Methylation</keyword>
<keyword id="KW-1185">Reference proteome</keyword>
<keyword id="KW-0687">Ribonucleoprotein</keyword>
<keyword id="KW-0689">Ribosomal protein</keyword>
<keyword id="KW-0694">RNA-binding</keyword>
<keyword id="KW-0699">rRNA-binding</keyword>
<keyword id="KW-0820">tRNA-binding</keyword>
<reference key="1">
    <citation type="journal article" date="2011" name="PLoS ONE">
        <title>The genome of Akkermansia muciniphila, a dedicated intestinal mucin degrader, and its use in exploring intestinal metagenomes.</title>
        <authorList>
            <person name="van Passel M.W."/>
            <person name="Kant R."/>
            <person name="Zoetendal E.G."/>
            <person name="Plugge C.M."/>
            <person name="Derrien M."/>
            <person name="Malfatti S.A."/>
            <person name="Chain P.S."/>
            <person name="Woyke T."/>
            <person name="Palva A."/>
            <person name="de Vos W.M."/>
            <person name="Smidt H."/>
        </authorList>
    </citation>
    <scope>NUCLEOTIDE SEQUENCE [LARGE SCALE GENOMIC DNA]</scope>
    <source>
        <strain>ATCC BAA-835 / DSM 22959 / JCM 33894 / BCRC 81048 / CCUG 64013 / CIP 107961 / Muc</strain>
    </source>
</reference>
<feature type="chain" id="PRO_1000194111" description="Small ribosomal subunit protein uS12">
    <location>
        <begin position="1"/>
        <end position="127"/>
    </location>
</feature>
<feature type="modified residue" description="3-methylthioaspartic acid" evidence="1">
    <location>
        <position position="89"/>
    </location>
</feature>
<accession>B2UMU4</accession>
<proteinExistence type="inferred from homology"/>
<name>RS12_AKKM8</name>
<organism>
    <name type="scientific">Akkermansia muciniphila (strain ATCC BAA-835 / DSM 22959 / JCM 33894 / BCRC 81048 / CCUG 64013 / CIP 107961 / Muc)</name>
    <dbReference type="NCBI Taxonomy" id="349741"/>
    <lineage>
        <taxon>Bacteria</taxon>
        <taxon>Pseudomonadati</taxon>
        <taxon>Verrucomicrobiota</taxon>
        <taxon>Verrucomicrobiia</taxon>
        <taxon>Verrucomicrobiales</taxon>
        <taxon>Akkermansiaceae</taxon>
        <taxon>Akkermansia</taxon>
    </lineage>
</organism>